<accession>P0AD71</accession>
<accession>P46127</accession>
<accession>P75701</accession>
<proteinExistence type="inferred from homology"/>
<sequence length="385" mass="41849">MKRSLLFSAVLCAASLTSVHAAQPITEPEFASDIVDRYADHIFYGSGATGMALVVIDGNQRVFRSYGETRPGNNVRPQLDSVVRIASLTKLMTSEMLVKLLDQGTVKLNDPLSKYAPPGARVPTYNGTPITLVNLATHTSALPREQPGGAAHRPVFVWPTREQRWKYLSTAKLKAAPGSQAAYSNLAFDLLADALANASGKPYTQLFEEQITRPLGMKDTTYTPSPDQCRRLMVAERGASPCNNTLAAIGSGGVYSTPGDMMRWMQQYLSSDFYQRSNQADRMQTLIYQRAQFTKVIGMDVPGKADALGLGWVYMAPKEGRPGIIQKTGGGGGFITYMAMIPQKNIGAFVVVTRSPLTRFKNMSDGINDLVTELSGNKPLVIPAS</sequence>
<evidence type="ECO:0000250" key="1"/>
<evidence type="ECO:0000255" key="2"/>
<evidence type="ECO:0000305" key="3"/>
<dbReference type="EC" id="3.4.-.-"/>
<dbReference type="EMBL" id="AE005174">
    <property type="protein sequence ID" value="AAG54722.1"/>
    <property type="molecule type" value="Genomic_DNA"/>
</dbReference>
<dbReference type="EMBL" id="BA000007">
    <property type="protein sequence ID" value="BAB33849.1"/>
    <property type="molecule type" value="Genomic_DNA"/>
</dbReference>
<dbReference type="PIR" id="B90682">
    <property type="entry name" value="B90682"/>
</dbReference>
<dbReference type="PIR" id="F85532">
    <property type="entry name" value="F85532"/>
</dbReference>
<dbReference type="RefSeq" id="NP_308453.1">
    <property type="nucleotide sequence ID" value="NC_002695.1"/>
</dbReference>
<dbReference type="RefSeq" id="WP_000830741.1">
    <property type="nucleotide sequence ID" value="NZ_VOAI01000005.1"/>
</dbReference>
<dbReference type="SMR" id="P0AD71"/>
<dbReference type="STRING" id="155864.Z0472"/>
<dbReference type="MEROPS" id="S12.012"/>
<dbReference type="GeneID" id="914528"/>
<dbReference type="GeneID" id="93777086"/>
<dbReference type="KEGG" id="ece:Z0472"/>
<dbReference type="KEGG" id="ecs:ECs_0426"/>
<dbReference type="PATRIC" id="fig|386585.9.peg.521"/>
<dbReference type="eggNOG" id="COG1680">
    <property type="taxonomic scope" value="Bacteria"/>
</dbReference>
<dbReference type="HOGENOM" id="CLU_020027_7_1_6"/>
<dbReference type="OMA" id="NDTILWT"/>
<dbReference type="Proteomes" id="UP000000558">
    <property type="component" value="Chromosome"/>
</dbReference>
<dbReference type="Proteomes" id="UP000002519">
    <property type="component" value="Chromosome"/>
</dbReference>
<dbReference type="GO" id="GO:0005886">
    <property type="term" value="C:plasma membrane"/>
    <property type="evidence" value="ECO:0007669"/>
    <property type="project" value="UniProtKB-SubCell"/>
</dbReference>
<dbReference type="GO" id="GO:0004180">
    <property type="term" value="F:carboxypeptidase activity"/>
    <property type="evidence" value="ECO:0000250"/>
    <property type="project" value="UniProtKB"/>
</dbReference>
<dbReference type="GO" id="GO:0004175">
    <property type="term" value="F:endopeptidase activity"/>
    <property type="evidence" value="ECO:0000250"/>
    <property type="project" value="UniProtKB"/>
</dbReference>
<dbReference type="GO" id="GO:0071555">
    <property type="term" value="P:cell wall organization"/>
    <property type="evidence" value="ECO:0007669"/>
    <property type="project" value="UniProtKB-KW"/>
</dbReference>
<dbReference type="GO" id="GO:0009253">
    <property type="term" value="P:peptidoglycan catabolic process"/>
    <property type="evidence" value="ECO:0000250"/>
    <property type="project" value="UniProtKB"/>
</dbReference>
<dbReference type="GO" id="GO:0006508">
    <property type="term" value="P:proteolysis"/>
    <property type="evidence" value="ECO:0007669"/>
    <property type="project" value="UniProtKB-KW"/>
</dbReference>
<dbReference type="GO" id="GO:0008360">
    <property type="term" value="P:regulation of cell shape"/>
    <property type="evidence" value="ECO:0000250"/>
    <property type="project" value="UniProtKB"/>
</dbReference>
<dbReference type="FunFam" id="3.40.710.10:FF:000011">
    <property type="entry name" value="Penicillin-binding protein AmpH"/>
    <property type="match status" value="1"/>
</dbReference>
<dbReference type="Gene3D" id="3.40.710.10">
    <property type="entry name" value="DD-peptidase/beta-lactamase superfamily"/>
    <property type="match status" value="1"/>
</dbReference>
<dbReference type="InterPro" id="IPR001466">
    <property type="entry name" value="Beta-lactam-related"/>
</dbReference>
<dbReference type="InterPro" id="IPR012338">
    <property type="entry name" value="Beta-lactam/transpept-like"/>
</dbReference>
<dbReference type="InterPro" id="IPR051478">
    <property type="entry name" value="Beta-lactamase-like_AB/R"/>
</dbReference>
<dbReference type="NCBIfam" id="NF007943">
    <property type="entry name" value="PRK10662.1"/>
    <property type="match status" value="1"/>
</dbReference>
<dbReference type="PANTHER" id="PTHR22935:SF95">
    <property type="entry name" value="BETA-LACTAMASE-LIKE 1-RELATED"/>
    <property type="match status" value="1"/>
</dbReference>
<dbReference type="PANTHER" id="PTHR22935">
    <property type="entry name" value="PENICILLIN-BINDING PROTEIN"/>
    <property type="match status" value="1"/>
</dbReference>
<dbReference type="Pfam" id="PF00144">
    <property type="entry name" value="Beta-lactamase"/>
    <property type="match status" value="1"/>
</dbReference>
<dbReference type="SUPFAM" id="SSF56601">
    <property type="entry name" value="beta-lactamase/transpeptidase-like"/>
    <property type="match status" value="1"/>
</dbReference>
<organism>
    <name type="scientific">Escherichia coli O157:H7</name>
    <dbReference type="NCBI Taxonomy" id="83334"/>
    <lineage>
        <taxon>Bacteria</taxon>
        <taxon>Pseudomonadati</taxon>
        <taxon>Pseudomonadota</taxon>
        <taxon>Gammaproteobacteria</taxon>
        <taxon>Enterobacterales</taxon>
        <taxon>Enterobacteriaceae</taxon>
        <taxon>Escherichia</taxon>
    </lineage>
</organism>
<keyword id="KW-0121">Carboxypeptidase</keyword>
<keyword id="KW-0997">Cell inner membrane</keyword>
<keyword id="KW-1003">Cell membrane</keyword>
<keyword id="KW-0133">Cell shape</keyword>
<keyword id="KW-0961">Cell wall biogenesis/degradation</keyword>
<keyword id="KW-0378">Hydrolase</keyword>
<keyword id="KW-0472">Membrane</keyword>
<keyword id="KW-0645">Protease</keyword>
<keyword id="KW-1185">Reference proteome</keyword>
<keyword id="KW-0732">Signal</keyword>
<feature type="signal peptide" evidence="2">
    <location>
        <begin position="1"/>
        <end position="21"/>
    </location>
</feature>
<feature type="chain" id="PRO_0000195475" description="D-alanyl-D-alanine-carboxypeptidase/endopeptidase AmpH">
    <location>
        <begin position="22"/>
        <end position="385"/>
    </location>
</feature>
<gene>
    <name type="primary">ampH</name>
    <name type="ordered locus">Z0472</name>
    <name type="ordered locus">ECs0426</name>
</gene>
<reference key="1">
    <citation type="journal article" date="2001" name="Nature">
        <title>Genome sequence of enterohaemorrhagic Escherichia coli O157:H7.</title>
        <authorList>
            <person name="Perna N.T."/>
            <person name="Plunkett G. III"/>
            <person name="Burland V."/>
            <person name="Mau B."/>
            <person name="Glasner J.D."/>
            <person name="Rose D.J."/>
            <person name="Mayhew G.F."/>
            <person name="Evans P.S."/>
            <person name="Gregor J."/>
            <person name="Kirkpatrick H.A."/>
            <person name="Posfai G."/>
            <person name="Hackett J."/>
            <person name="Klink S."/>
            <person name="Boutin A."/>
            <person name="Shao Y."/>
            <person name="Miller L."/>
            <person name="Grotbeck E.J."/>
            <person name="Davis N.W."/>
            <person name="Lim A."/>
            <person name="Dimalanta E.T."/>
            <person name="Potamousis K."/>
            <person name="Apodaca J."/>
            <person name="Anantharaman T.S."/>
            <person name="Lin J."/>
            <person name="Yen G."/>
            <person name="Schwartz D.C."/>
            <person name="Welch R.A."/>
            <person name="Blattner F.R."/>
        </authorList>
    </citation>
    <scope>NUCLEOTIDE SEQUENCE [LARGE SCALE GENOMIC DNA]</scope>
    <source>
        <strain>O157:H7 / EDL933 / ATCC 700927 / EHEC</strain>
    </source>
</reference>
<reference key="2">
    <citation type="journal article" date="2001" name="DNA Res.">
        <title>Complete genome sequence of enterohemorrhagic Escherichia coli O157:H7 and genomic comparison with a laboratory strain K-12.</title>
        <authorList>
            <person name="Hayashi T."/>
            <person name="Makino K."/>
            <person name="Ohnishi M."/>
            <person name="Kurokawa K."/>
            <person name="Ishii K."/>
            <person name="Yokoyama K."/>
            <person name="Han C.-G."/>
            <person name="Ohtsubo E."/>
            <person name="Nakayama K."/>
            <person name="Murata T."/>
            <person name="Tanaka M."/>
            <person name="Tobe T."/>
            <person name="Iida T."/>
            <person name="Takami H."/>
            <person name="Honda T."/>
            <person name="Sasakawa C."/>
            <person name="Ogasawara N."/>
            <person name="Yasunaga T."/>
            <person name="Kuhara S."/>
            <person name="Shiba T."/>
            <person name="Hattori M."/>
            <person name="Shinagawa H."/>
        </authorList>
    </citation>
    <scope>NUCLEOTIDE SEQUENCE [LARGE SCALE GENOMIC DNA]</scope>
    <source>
        <strain>O157:H7 / Sakai / RIMD 0509952 / EHEC</strain>
    </source>
</reference>
<protein>
    <recommendedName>
        <fullName>D-alanyl-D-alanine-carboxypeptidase/endopeptidase AmpH</fullName>
        <ecNumber>3.4.-.-</ecNumber>
    </recommendedName>
    <alternativeName>
        <fullName>DD-alanine-endopeptidase</fullName>
    </alternativeName>
    <alternativeName>
        <fullName>DD-carboxypeptidase</fullName>
    </alternativeName>
    <alternativeName>
        <fullName>Penicillin-binding protein</fullName>
        <shortName>PBP</shortName>
    </alternativeName>
</protein>
<name>AMPH_ECO57</name>
<comment type="function">
    <text evidence="1">Hydrolyzes the cross-linked dimers tetrapentapeptide (D45) and tetratetrapeptide (D44). Removes the terminal D-alanine from muropeptides and disaccharide pentapeptide M5 with a C-terminal D-Ala-D-Ala dipeptide. Associated with recycling and remodeling of peptidoglycan (PG) (By similarity).</text>
</comment>
<comment type="activity regulation">
    <text>Inhibited by cefmetazole.</text>
</comment>
<comment type="subcellular location">
    <subcellularLocation>
        <location evidence="1">Cell inner membrane</location>
    </subcellularLocation>
</comment>
<comment type="similarity">
    <text evidence="3">Belongs to the beta-lactamase family.</text>
</comment>